<accession>C3N044</accession>
<protein>
    <recommendedName>
        <fullName evidence="1">Protein pelota homolog</fullName>
        <ecNumber evidence="1">3.1.-.-</ecNumber>
    </recommendedName>
</protein>
<dbReference type="EC" id="3.1.-.-" evidence="1"/>
<dbReference type="EMBL" id="CP001401">
    <property type="protein sequence ID" value="ACP55984.1"/>
    <property type="molecule type" value="Genomic_DNA"/>
</dbReference>
<dbReference type="RefSeq" id="WP_012719028.1">
    <property type="nucleotide sequence ID" value="NC_012632.1"/>
</dbReference>
<dbReference type="SMR" id="C3N044"/>
<dbReference type="KEGG" id="sim:M1627_2118"/>
<dbReference type="HOGENOM" id="CLU_023334_0_0_2"/>
<dbReference type="Proteomes" id="UP000002307">
    <property type="component" value="Chromosome"/>
</dbReference>
<dbReference type="GO" id="GO:0005737">
    <property type="term" value="C:cytoplasm"/>
    <property type="evidence" value="ECO:0007669"/>
    <property type="project" value="UniProtKB-SubCell"/>
</dbReference>
<dbReference type="GO" id="GO:0004519">
    <property type="term" value="F:endonuclease activity"/>
    <property type="evidence" value="ECO:0007669"/>
    <property type="project" value="UniProtKB-UniRule"/>
</dbReference>
<dbReference type="GO" id="GO:0046872">
    <property type="term" value="F:metal ion binding"/>
    <property type="evidence" value="ECO:0007669"/>
    <property type="project" value="UniProtKB-UniRule"/>
</dbReference>
<dbReference type="GO" id="GO:0070651">
    <property type="term" value="P:nonfunctional rRNA decay"/>
    <property type="evidence" value="ECO:0007669"/>
    <property type="project" value="TreeGrafter"/>
</dbReference>
<dbReference type="GO" id="GO:0070966">
    <property type="term" value="P:nuclear-transcribed mRNA catabolic process, no-go decay"/>
    <property type="evidence" value="ECO:0007669"/>
    <property type="project" value="InterPro"/>
</dbReference>
<dbReference type="GO" id="GO:0070481">
    <property type="term" value="P:nuclear-transcribed mRNA catabolic process, non-stop decay"/>
    <property type="evidence" value="ECO:0007669"/>
    <property type="project" value="InterPro"/>
</dbReference>
<dbReference type="GO" id="GO:0032790">
    <property type="term" value="P:ribosome disassembly"/>
    <property type="evidence" value="ECO:0007669"/>
    <property type="project" value="TreeGrafter"/>
</dbReference>
<dbReference type="GO" id="GO:0071025">
    <property type="term" value="P:RNA surveillance"/>
    <property type="evidence" value="ECO:0007669"/>
    <property type="project" value="InterPro"/>
</dbReference>
<dbReference type="FunFam" id="2.30.30.870:FF:000002">
    <property type="entry name" value="Protein pelota homolog"/>
    <property type="match status" value="1"/>
</dbReference>
<dbReference type="FunFam" id="3.30.420.60:FF:000005">
    <property type="entry name" value="Protein pelota homolog"/>
    <property type="match status" value="1"/>
</dbReference>
<dbReference type="Gene3D" id="3.30.1330.30">
    <property type="match status" value="1"/>
</dbReference>
<dbReference type="Gene3D" id="3.30.420.60">
    <property type="entry name" value="eRF1 domain 2"/>
    <property type="match status" value="1"/>
</dbReference>
<dbReference type="Gene3D" id="2.30.30.870">
    <property type="entry name" value="Pelota, domain A"/>
    <property type="match status" value="1"/>
</dbReference>
<dbReference type="HAMAP" id="MF_01853">
    <property type="entry name" value="PelO"/>
    <property type="match status" value="1"/>
</dbReference>
<dbReference type="InterPro" id="IPR042226">
    <property type="entry name" value="eFR1_2_sf"/>
</dbReference>
<dbReference type="InterPro" id="IPR005140">
    <property type="entry name" value="eRF1_1_Pelota"/>
</dbReference>
<dbReference type="InterPro" id="IPR005142">
    <property type="entry name" value="eRF1_3"/>
</dbReference>
<dbReference type="InterPro" id="IPR038069">
    <property type="entry name" value="Pelota/DOM34_N"/>
</dbReference>
<dbReference type="InterPro" id="IPR023521">
    <property type="entry name" value="Pelota_arc"/>
</dbReference>
<dbReference type="InterPro" id="IPR029064">
    <property type="entry name" value="Ribosomal_eL30-like_sf"/>
</dbReference>
<dbReference type="InterPro" id="IPR004405">
    <property type="entry name" value="Transl-rel_pelota"/>
</dbReference>
<dbReference type="NCBIfam" id="TIGR00111">
    <property type="entry name" value="pelota"/>
    <property type="match status" value="1"/>
</dbReference>
<dbReference type="PANTHER" id="PTHR10853">
    <property type="entry name" value="PELOTA"/>
    <property type="match status" value="1"/>
</dbReference>
<dbReference type="PANTHER" id="PTHR10853:SF0">
    <property type="entry name" value="PROTEIN PELOTA HOMOLOG"/>
    <property type="match status" value="1"/>
</dbReference>
<dbReference type="Pfam" id="PF03463">
    <property type="entry name" value="eRF1_1"/>
    <property type="match status" value="1"/>
</dbReference>
<dbReference type="Pfam" id="PF03465">
    <property type="entry name" value="eRF1_3"/>
    <property type="match status" value="1"/>
</dbReference>
<dbReference type="SMART" id="SM01194">
    <property type="entry name" value="eRF1_1"/>
    <property type="match status" value="1"/>
</dbReference>
<dbReference type="SUPFAM" id="SSF159065">
    <property type="entry name" value="Dom34/Pelota N-terminal domain-like"/>
    <property type="match status" value="1"/>
</dbReference>
<dbReference type="SUPFAM" id="SSF55315">
    <property type="entry name" value="L30e-like"/>
    <property type="match status" value="1"/>
</dbReference>
<dbReference type="SUPFAM" id="SSF53137">
    <property type="entry name" value="Translational machinery components"/>
    <property type="match status" value="1"/>
</dbReference>
<comment type="function">
    <text evidence="1">May function in recognizing stalled ribosomes, interact with stem-loop structures in stalled mRNA molecules, and effect endonucleolytic cleavage of the mRNA. May play a role in the release non-functional ribosomes and degradation of damaged mRNAs. Has endoribonuclease activity.</text>
</comment>
<comment type="cofactor">
    <cofactor evidence="1">
        <name>a divalent metal cation</name>
        <dbReference type="ChEBI" id="CHEBI:60240"/>
    </cofactor>
</comment>
<comment type="subunit">
    <text evidence="1">Monomer.</text>
</comment>
<comment type="subcellular location">
    <subcellularLocation>
        <location evidence="1">Cytoplasm</location>
    </subcellularLocation>
</comment>
<comment type="domain">
    <text evidence="1">The N-terminal domain has the RNA-binding Sm fold. It harbors the endoribonuclease activity.</text>
</comment>
<comment type="similarity">
    <text evidence="1">Belongs to the eukaryotic release factor 1 family. Pelota subfamily.</text>
</comment>
<reference key="1">
    <citation type="journal article" date="2009" name="Proc. Natl. Acad. Sci. U.S.A.">
        <title>Biogeography of the Sulfolobus islandicus pan-genome.</title>
        <authorList>
            <person name="Reno M.L."/>
            <person name="Held N.L."/>
            <person name="Fields C.J."/>
            <person name="Burke P.V."/>
            <person name="Whitaker R.J."/>
        </authorList>
    </citation>
    <scope>NUCLEOTIDE SEQUENCE [LARGE SCALE GENOMIC DNA]</scope>
    <source>
        <strain>M.16.27</strain>
    </source>
</reference>
<gene>
    <name evidence="1" type="primary">pelA</name>
    <name type="ordered locus">M1627_2118</name>
</gene>
<keyword id="KW-0963">Cytoplasm</keyword>
<keyword id="KW-0255">Endonuclease</keyword>
<keyword id="KW-0378">Hydrolase</keyword>
<keyword id="KW-0479">Metal-binding</keyword>
<keyword id="KW-0540">Nuclease</keyword>
<feature type="chain" id="PRO_1000216138" description="Protein pelota homolog">
    <location>
        <begin position="1"/>
        <end position="344"/>
    </location>
</feature>
<name>PELO_SACI3</name>
<organism>
    <name type="scientific">Saccharolobus islandicus (strain M.16.27)</name>
    <name type="common">Sulfolobus islandicus</name>
    <dbReference type="NCBI Taxonomy" id="427318"/>
    <lineage>
        <taxon>Archaea</taxon>
        <taxon>Thermoproteota</taxon>
        <taxon>Thermoprotei</taxon>
        <taxon>Sulfolobales</taxon>
        <taxon>Sulfolobaceae</taxon>
        <taxon>Saccharolobus</taxon>
    </lineage>
</organism>
<evidence type="ECO:0000255" key="1">
    <source>
        <dbReference type="HAMAP-Rule" id="MF_01853"/>
    </source>
</evidence>
<sequence>MRILEFDEKRQAAKLHIESEDDLWILHLILEKGDKVVAKTTRDIGLGKESRRIPMTIVLKVDYTEFQEFTNRLRIHGIIEDAPERFGIRGAHHTINLDIGDEIIIIKQQWSKYALDKLKKQADKRSKIIIALVDFDEYLIAIPFEQGIKILSEKSLRSLNEEEGIIEQNALEVATELAEYVKQYNPDAILLAGPGFFKEEVAKKVNNILKNKKVYIDSVSSATRAGLHEILKRDIIDKIMSDYEIAIGAKKMEKAMELLAKQPELVTYGLEQVKNAVEMGAVETVLLIEDLLSSNNQERLAIERILGDIENKRGEIILVPKESPIYFELKNLTGILAILRFRIN</sequence>
<proteinExistence type="inferred from homology"/>